<protein>
    <recommendedName>
        <fullName evidence="1">2-succinyl-6-hydroxy-2,4-cyclohexadiene-1-carboxylate synthase</fullName>
        <shortName evidence="1">SHCHC synthase</shortName>
        <ecNumber evidence="1">4.2.99.20</ecNumber>
    </recommendedName>
</protein>
<keyword id="KW-0456">Lyase</keyword>
<keyword id="KW-0474">Menaquinone biosynthesis</keyword>
<gene>
    <name evidence="1" type="primary">menH</name>
    <name type="ordered locus">SPAB_00673</name>
</gene>
<evidence type="ECO:0000255" key="1">
    <source>
        <dbReference type="HAMAP-Rule" id="MF_01660"/>
    </source>
</evidence>
<comment type="function">
    <text evidence="1">Catalyzes a proton abstraction reaction that results in 2,5-elimination of pyruvate from 2-succinyl-5-enolpyruvyl-6-hydroxy-3-cyclohexene-1-carboxylate (SEPHCHC) and the formation of 2-succinyl-6-hydroxy-2,4-cyclohexadiene-1-carboxylate (SHCHC).</text>
</comment>
<comment type="catalytic activity">
    <reaction evidence="1">
        <text>5-enolpyruvoyl-6-hydroxy-2-succinyl-cyclohex-3-ene-1-carboxylate = (1R,6R)-6-hydroxy-2-succinyl-cyclohexa-2,4-diene-1-carboxylate + pyruvate</text>
        <dbReference type="Rhea" id="RHEA:25597"/>
        <dbReference type="ChEBI" id="CHEBI:15361"/>
        <dbReference type="ChEBI" id="CHEBI:58689"/>
        <dbReference type="ChEBI" id="CHEBI:58818"/>
        <dbReference type="EC" id="4.2.99.20"/>
    </reaction>
</comment>
<comment type="pathway">
    <text evidence="1">Quinol/quinone metabolism; 1,4-dihydroxy-2-naphthoate biosynthesis; 1,4-dihydroxy-2-naphthoate from chorismate: step 3/7.</text>
</comment>
<comment type="pathway">
    <text evidence="1">Quinol/quinone metabolism; menaquinone biosynthesis.</text>
</comment>
<comment type="subunit">
    <text evidence="1">Monomer.</text>
</comment>
<comment type="similarity">
    <text evidence="1">Belongs to the AB hydrolase superfamily. MenH family.</text>
</comment>
<sequence>MMLHAQHMPGQPGAPSLVFLHGFSGDCREWQPVGEQFHGCSRLYIDLPGHGGSAAIPVGGFADVIRLLRATLISYNILKFWLVGYSLGGRVAMMAACQGIPGLCGLVVEGGHPGLQNEQARVERRLSDGRWAERFRREPLTEVFHDWYQQPVFASLTAQQRQALTALRSQNNGETLAAMLEATSLAVQPDLREALNALAFPFYYLCGERDSKFRALAQEVAATCHVIRNAGHNAHRENPAGVVDSLAQILRL</sequence>
<accession>A9N5A3</accession>
<reference key="1">
    <citation type="submission" date="2007-11" db="EMBL/GenBank/DDBJ databases">
        <authorList>
            <consortium name="The Salmonella enterica serovar Paratyphi B Genome Sequencing Project"/>
            <person name="McClelland M."/>
            <person name="Sanderson E.K."/>
            <person name="Porwollik S."/>
            <person name="Spieth J."/>
            <person name="Clifton W.S."/>
            <person name="Fulton R."/>
            <person name="Cordes M."/>
            <person name="Wollam A."/>
            <person name="Shah N."/>
            <person name="Pepin K."/>
            <person name="Bhonagiri V."/>
            <person name="Nash W."/>
            <person name="Johnson M."/>
            <person name="Thiruvilangam P."/>
            <person name="Wilson R."/>
        </authorList>
    </citation>
    <scope>NUCLEOTIDE SEQUENCE [LARGE SCALE GENOMIC DNA]</scope>
    <source>
        <strain>ATCC BAA-1250 / SPB7</strain>
    </source>
</reference>
<dbReference type="EC" id="4.2.99.20" evidence="1"/>
<dbReference type="EMBL" id="CP000886">
    <property type="protein sequence ID" value="ABX66099.1"/>
    <property type="molecule type" value="Genomic_DNA"/>
</dbReference>
<dbReference type="RefSeq" id="WP_000979138.1">
    <property type="nucleotide sequence ID" value="NC_010102.1"/>
</dbReference>
<dbReference type="SMR" id="A9N5A3"/>
<dbReference type="ESTHER" id="salty-YFBB">
    <property type="family name" value="MenH_SHCHC"/>
</dbReference>
<dbReference type="KEGG" id="spq:SPAB_00673"/>
<dbReference type="PATRIC" id="fig|1016998.12.peg.633"/>
<dbReference type="HOGENOM" id="CLU_020336_38_2_6"/>
<dbReference type="BioCyc" id="SENT1016998:SPAB_RS02795-MONOMER"/>
<dbReference type="UniPathway" id="UPA00079"/>
<dbReference type="UniPathway" id="UPA01057">
    <property type="reaction ID" value="UER00900"/>
</dbReference>
<dbReference type="Proteomes" id="UP000008556">
    <property type="component" value="Chromosome"/>
</dbReference>
<dbReference type="GO" id="GO:0070205">
    <property type="term" value="F:2-succinyl-6-hydroxy-2,4-cyclohexadiene-1-carboxylate synthase activity"/>
    <property type="evidence" value="ECO:0007669"/>
    <property type="project" value="UniProtKB-UniRule"/>
</dbReference>
<dbReference type="GO" id="GO:0009234">
    <property type="term" value="P:menaquinone biosynthetic process"/>
    <property type="evidence" value="ECO:0007669"/>
    <property type="project" value="UniProtKB-UniRule"/>
</dbReference>
<dbReference type="Gene3D" id="3.40.50.1820">
    <property type="entry name" value="alpha/beta hydrolase"/>
    <property type="match status" value="1"/>
</dbReference>
<dbReference type="HAMAP" id="MF_01660">
    <property type="entry name" value="MenH"/>
    <property type="match status" value="1"/>
</dbReference>
<dbReference type="InterPro" id="IPR000073">
    <property type="entry name" value="AB_hydrolase_1"/>
</dbReference>
<dbReference type="InterPro" id="IPR029058">
    <property type="entry name" value="AB_hydrolase_fold"/>
</dbReference>
<dbReference type="InterPro" id="IPR022485">
    <property type="entry name" value="SHCHC_synthase_MenH"/>
</dbReference>
<dbReference type="NCBIfam" id="TIGR03695">
    <property type="entry name" value="menH_SHCHC"/>
    <property type="match status" value="1"/>
</dbReference>
<dbReference type="NCBIfam" id="NF008340">
    <property type="entry name" value="PRK11126.1"/>
    <property type="match status" value="1"/>
</dbReference>
<dbReference type="PANTHER" id="PTHR42916">
    <property type="entry name" value="2-SUCCINYL-5-ENOLPYRUVYL-6-HYDROXY-3-CYCLOHEXENE-1-CARBOXYLATE SYNTHASE"/>
    <property type="match status" value="1"/>
</dbReference>
<dbReference type="PANTHER" id="PTHR42916:SF1">
    <property type="entry name" value="PROTEIN PHYLLO, CHLOROPLASTIC"/>
    <property type="match status" value="1"/>
</dbReference>
<dbReference type="Pfam" id="PF12697">
    <property type="entry name" value="Abhydrolase_6"/>
    <property type="match status" value="1"/>
</dbReference>
<dbReference type="SUPFAM" id="SSF53474">
    <property type="entry name" value="alpha/beta-Hydrolases"/>
    <property type="match status" value="1"/>
</dbReference>
<name>MENH_SALPB</name>
<feature type="chain" id="PRO_0000341920" description="2-succinyl-6-hydroxy-2,4-cyclohexadiene-1-carboxylate synthase">
    <location>
        <begin position="1"/>
        <end position="252"/>
    </location>
</feature>
<organism>
    <name type="scientific">Salmonella paratyphi B (strain ATCC BAA-1250 / SPB7)</name>
    <dbReference type="NCBI Taxonomy" id="1016998"/>
    <lineage>
        <taxon>Bacteria</taxon>
        <taxon>Pseudomonadati</taxon>
        <taxon>Pseudomonadota</taxon>
        <taxon>Gammaproteobacteria</taxon>
        <taxon>Enterobacterales</taxon>
        <taxon>Enterobacteriaceae</taxon>
        <taxon>Salmonella</taxon>
    </lineage>
</organism>
<proteinExistence type="inferred from homology"/>